<sequence>MTKVITRFAPSPTGMLHVGNIRAALLNWLYAKKHNGQFILRFDDTDLERSKQEYKDAIEEDLKFLNINWDQTFNQLSRLSRYDAIKNLLLDKKRLYACYETPEELELKRKFQLSKGLPPIYDRASLNLTEEQAKKYIEQGRKPHYRFLVNHEPISWHDMIKGEVKYDGKALSDPIVIRADGSMTYMLCSVIDDIDYDITHIIRGEDHVSNTAIQMQMFEALNTTPPTFGHLSLIINKDEKISKRVGGFEIATLRKEIGIEAMAIASFFSLLGSSAQILPYKSMEKLANQFEISSFSKSPTIYQPEDLERLNHKLLISLDFDTVKERLKEIDAEYIDENFWLSVSPNLQKLRDVKDWWEICHQTPNVENLNLDKEYLKQAAELLPKGEITKDSWSIWTKEITNITGRKGKELFLPLRLALTARESGPEIASVLPLIDREEIIKRLTSA</sequence>
<organism>
    <name type="scientific">Rickettsia rickettsii (strain Sheila Smith)</name>
    <dbReference type="NCBI Taxonomy" id="392021"/>
    <lineage>
        <taxon>Bacteria</taxon>
        <taxon>Pseudomonadati</taxon>
        <taxon>Pseudomonadota</taxon>
        <taxon>Alphaproteobacteria</taxon>
        <taxon>Rickettsiales</taxon>
        <taxon>Rickettsiaceae</taxon>
        <taxon>Rickettsieae</taxon>
        <taxon>Rickettsia</taxon>
        <taxon>spotted fever group</taxon>
    </lineage>
</organism>
<comment type="function">
    <text evidence="1">Catalyzes the attachment of glutamate to tRNA(Glu) in a two-step reaction: glutamate is first activated by ATP to form Glu-AMP and then transferred to the acceptor end of tRNA(Glu).</text>
</comment>
<comment type="catalytic activity">
    <reaction evidence="1">
        <text>tRNA(Glu) + L-glutamate + ATP = L-glutamyl-tRNA(Glu) + AMP + diphosphate</text>
        <dbReference type="Rhea" id="RHEA:23540"/>
        <dbReference type="Rhea" id="RHEA-COMP:9663"/>
        <dbReference type="Rhea" id="RHEA-COMP:9680"/>
        <dbReference type="ChEBI" id="CHEBI:29985"/>
        <dbReference type="ChEBI" id="CHEBI:30616"/>
        <dbReference type="ChEBI" id="CHEBI:33019"/>
        <dbReference type="ChEBI" id="CHEBI:78442"/>
        <dbReference type="ChEBI" id="CHEBI:78520"/>
        <dbReference type="ChEBI" id="CHEBI:456215"/>
        <dbReference type="EC" id="6.1.1.17"/>
    </reaction>
</comment>
<comment type="subunit">
    <text evidence="1">Monomer.</text>
</comment>
<comment type="subcellular location">
    <subcellularLocation>
        <location evidence="1">Cytoplasm</location>
    </subcellularLocation>
</comment>
<comment type="similarity">
    <text evidence="1">Belongs to the class-I aminoacyl-tRNA synthetase family. Glutamate--tRNA ligase type 1 subfamily.</text>
</comment>
<evidence type="ECO:0000255" key="1">
    <source>
        <dbReference type="HAMAP-Rule" id="MF_00022"/>
    </source>
</evidence>
<feature type="chain" id="PRO_0000367762" description="Glutamate--tRNA ligase 1">
    <location>
        <begin position="1"/>
        <end position="447"/>
    </location>
</feature>
<feature type="short sequence motif" description="'HIGH' region" evidence="1">
    <location>
        <begin position="10"/>
        <end position="20"/>
    </location>
</feature>
<feature type="short sequence motif" description="'KMSKS' region" evidence="1">
    <location>
        <begin position="240"/>
        <end position="244"/>
    </location>
</feature>
<feature type="binding site" evidence="1">
    <location>
        <position position="243"/>
    </location>
    <ligand>
        <name>ATP</name>
        <dbReference type="ChEBI" id="CHEBI:30616"/>
    </ligand>
</feature>
<name>SYE1_RICRS</name>
<gene>
    <name evidence="1" type="primary">gltX1</name>
    <name type="ordered locus">A1G_02535</name>
</gene>
<reference key="1">
    <citation type="submission" date="2007-09" db="EMBL/GenBank/DDBJ databases">
        <title>Complete genome sequence of Rickettsia rickettsii.</title>
        <authorList>
            <person name="Madan A."/>
            <person name="Fahey J."/>
            <person name="Helton E."/>
            <person name="Ketteman M."/>
            <person name="Madan A."/>
            <person name="Rodrigues S."/>
            <person name="Sanchez A."/>
            <person name="Dasch G."/>
            <person name="Eremeeva M."/>
        </authorList>
    </citation>
    <scope>NUCLEOTIDE SEQUENCE [LARGE SCALE GENOMIC DNA]</scope>
    <source>
        <strain>Sheila Smith</strain>
    </source>
</reference>
<accession>A8GRM9</accession>
<protein>
    <recommendedName>
        <fullName evidence="1">Glutamate--tRNA ligase 1</fullName>
        <ecNumber evidence="1">6.1.1.17</ecNumber>
    </recommendedName>
    <alternativeName>
        <fullName evidence="1">Glutamyl-tRNA synthetase 1</fullName>
        <shortName evidence="1">GluRS 1</shortName>
    </alternativeName>
</protein>
<proteinExistence type="inferred from homology"/>
<dbReference type="EC" id="6.1.1.17" evidence="1"/>
<dbReference type="EMBL" id="CP000848">
    <property type="protein sequence ID" value="ABV76054.1"/>
    <property type="molecule type" value="Genomic_DNA"/>
</dbReference>
<dbReference type="SMR" id="A8GRM9"/>
<dbReference type="GeneID" id="79937212"/>
<dbReference type="KEGG" id="rri:A1G_02535"/>
<dbReference type="HOGENOM" id="CLU_015768_6_1_5"/>
<dbReference type="Proteomes" id="UP000006832">
    <property type="component" value="Chromosome"/>
</dbReference>
<dbReference type="GO" id="GO:0005737">
    <property type="term" value="C:cytoplasm"/>
    <property type="evidence" value="ECO:0007669"/>
    <property type="project" value="UniProtKB-SubCell"/>
</dbReference>
<dbReference type="GO" id="GO:0005524">
    <property type="term" value="F:ATP binding"/>
    <property type="evidence" value="ECO:0007669"/>
    <property type="project" value="UniProtKB-UniRule"/>
</dbReference>
<dbReference type="GO" id="GO:0004818">
    <property type="term" value="F:glutamate-tRNA ligase activity"/>
    <property type="evidence" value="ECO:0007669"/>
    <property type="project" value="UniProtKB-UniRule"/>
</dbReference>
<dbReference type="GO" id="GO:0000049">
    <property type="term" value="F:tRNA binding"/>
    <property type="evidence" value="ECO:0007669"/>
    <property type="project" value="InterPro"/>
</dbReference>
<dbReference type="GO" id="GO:0008270">
    <property type="term" value="F:zinc ion binding"/>
    <property type="evidence" value="ECO:0007669"/>
    <property type="project" value="InterPro"/>
</dbReference>
<dbReference type="GO" id="GO:0006424">
    <property type="term" value="P:glutamyl-tRNA aminoacylation"/>
    <property type="evidence" value="ECO:0007669"/>
    <property type="project" value="UniProtKB-UniRule"/>
</dbReference>
<dbReference type="CDD" id="cd00808">
    <property type="entry name" value="GluRS_core"/>
    <property type="match status" value="1"/>
</dbReference>
<dbReference type="Gene3D" id="1.10.10.350">
    <property type="match status" value="1"/>
</dbReference>
<dbReference type="Gene3D" id="3.40.50.620">
    <property type="entry name" value="HUPs"/>
    <property type="match status" value="1"/>
</dbReference>
<dbReference type="HAMAP" id="MF_00022">
    <property type="entry name" value="Glu_tRNA_synth_type1"/>
    <property type="match status" value="1"/>
</dbReference>
<dbReference type="InterPro" id="IPR045462">
    <property type="entry name" value="aa-tRNA-synth_I_cd-bd"/>
</dbReference>
<dbReference type="InterPro" id="IPR020751">
    <property type="entry name" value="aa-tRNA-synth_I_codon-bd_sub2"/>
</dbReference>
<dbReference type="InterPro" id="IPR001412">
    <property type="entry name" value="aa-tRNA-synth_I_CS"/>
</dbReference>
<dbReference type="InterPro" id="IPR008925">
    <property type="entry name" value="aa_tRNA-synth_I_cd-bd_sf"/>
</dbReference>
<dbReference type="InterPro" id="IPR004527">
    <property type="entry name" value="Glu-tRNA-ligase_bac/mito"/>
</dbReference>
<dbReference type="InterPro" id="IPR000924">
    <property type="entry name" value="Glu/Gln-tRNA-synth"/>
</dbReference>
<dbReference type="InterPro" id="IPR020058">
    <property type="entry name" value="Glu/Gln-tRNA-synth_Ib_cat-dom"/>
</dbReference>
<dbReference type="InterPro" id="IPR049940">
    <property type="entry name" value="GluQ/Sye"/>
</dbReference>
<dbReference type="InterPro" id="IPR033910">
    <property type="entry name" value="GluRS_core"/>
</dbReference>
<dbReference type="InterPro" id="IPR014729">
    <property type="entry name" value="Rossmann-like_a/b/a_fold"/>
</dbReference>
<dbReference type="NCBIfam" id="TIGR00464">
    <property type="entry name" value="gltX_bact"/>
    <property type="match status" value="1"/>
</dbReference>
<dbReference type="PANTHER" id="PTHR43311">
    <property type="entry name" value="GLUTAMATE--TRNA LIGASE"/>
    <property type="match status" value="1"/>
</dbReference>
<dbReference type="PANTHER" id="PTHR43311:SF2">
    <property type="entry name" value="GLUTAMATE--TRNA LIGASE, MITOCHONDRIAL-RELATED"/>
    <property type="match status" value="1"/>
</dbReference>
<dbReference type="Pfam" id="PF19269">
    <property type="entry name" value="Anticodon_2"/>
    <property type="match status" value="1"/>
</dbReference>
<dbReference type="Pfam" id="PF00749">
    <property type="entry name" value="tRNA-synt_1c"/>
    <property type="match status" value="1"/>
</dbReference>
<dbReference type="PRINTS" id="PR00987">
    <property type="entry name" value="TRNASYNTHGLU"/>
</dbReference>
<dbReference type="SUPFAM" id="SSF48163">
    <property type="entry name" value="An anticodon-binding domain of class I aminoacyl-tRNA synthetases"/>
    <property type="match status" value="1"/>
</dbReference>
<dbReference type="SUPFAM" id="SSF52374">
    <property type="entry name" value="Nucleotidylyl transferase"/>
    <property type="match status" value="1"/>
</dbReference>
<dbReference type="PROSITE" id="PS00178">
    <property type="entry name" value="AA_TRNA_LIGASE_I"/>
    <property type="match status" value="1"/>
</dbReference>
<keyword id="KW-0030">Aminoacyl-tRNA synthetase</keyword>
<keyword id="KW-0067">ATP-binding</keyword>
<keyword id="KW-0963">Cytoplasm</keyword>
<keyword id="KW-0436">Ligase</keyword>
<keyword id="KW-0547">Nucleotide-binding</keyword>
<keyword id="KW-0648">Protein biosynthesis</keyword>